<protein>
    <recommendedName>
        <fullName evidence="6">Enoyl-CoA hydratase AKT3-2</fullName>
        <ecNumber evidence="9">4.2.1.17</ecNumber>
    </recommendedName>
    <alternativeName>
        <fullName evidence="6">AK-toxin biosynthesis protein 3-2</fullName>
    </alternativeName>
</protein>
<keyword id="KW-0456">Lyase</keyword>
<keyword id="KW-0576">Peroxisome</keyword>
<keyword id="KW-0843">Virulence</keyword>
<name>AKT32_ALTAL</name>
<comment type="function">
    <text evidence="2 3 4 5 7">Enoyl-CoA hydratase; part of the gene clusters that mediate the biosynthesis of the host-selective toxins (HSTs) AK-toxins responsible for Japanese pear black spot disease by the Japanese pear pathotype (PubMed:10975654). AK-toxins are esters of 9,10-epoxy 8-hydroxy 9-methyldecatrienoic acid (EDA) (PubMed:22846083). On cellular level, AK-toxins affect plasma membrane of susceptible cells and cause a sudden increase in loss of K(+) after a few minutes of toxin treatment (PubMed:22846083). The acyl-CoA ligase AKT1, the hydrolase AKT2 and enoyl-CoA hydratase AKT3 are all involved in the biosynthesis of the AK-, AF- and ACT-toxin common 9,10-epoxy-8-hydroxy-9-methyl-decatrienoic acid (EDA) structural moiety (PubMed:10432635, PubMed:10975654, PubMed:22846083). Part of the EDA biosynthesis occurs in the peroxisome since these 3 enzymes are localized in peroxisomes (PubMed:20348386). The exact roles of the 3 enzymes, as well as of additional AK-toxin clusters enzymes, including AKT4, AKT6 and AKTS1, have still to be elucidated (PubMed:10432635, PubMed:10975654, PubMed:22846083). The Cytochrome P450 monooxygenase AKT7 on the other side functions to limit production of EDA and AK-toxin, probably via the catalysis of a side reaction of EDA or its precursor (PubMed:24611558).</text>
</comment>
<comment type="catalytic activity">
    <reaction evidence="9">
        <text>a (3S)-3-hydroxyacyl-CoA = a (2E)-enoyl-CoA + H2O</text>
        <dbReference type="Rhea" id="RHEA:16105"/>
        <dbReference type="ChEBI" id="CHEBI:15377"/>
        <dbReference type="ChEBI" id="CHEBI:57318"/>
        <dbReference type="ChEBI" id="CHEBI:58856"/>
        <dbReference type="EC" id="4.2.1.17"/>
    </reaction>
</comment>
<comment type="catalytic activity">
    <reaction evidence="9">
        <text>a 4-saturated-(3S)-3-hydroxyacyl-CoA = a (3E)-enoyl-CoA + H2O</text>
        <dbReference type="Rhea" id="RHEA:20724"/>
        <dbReference type="ChEBI" id="CHEBI:15377"/>
        <dbReference type="ChEBI" id="CHEBI:58521"/>
        <dbReference type="ChEBI" id="CHEBI:137480"/>
        <dbReference type="EC" id="4.2.1.17"/>
    </reaction>
</comment>
<comment type="pathway">
    <text evidence="9">Mycotoxin biosynthesis.</text>
</comment>
<comment type="subcellular location">
    <subcellularLocation>
        <location evidence="1">Peroxisome</location>
    </subcellularLocation>
    <text evidence="1">The peroxisomal location requires the C-terminal tripeptide peroxisomal targeting signal.</text>
</comment>
<comment type="miscellaneous">
    <text evidence="3">Gene clusters encoding host-selective toxins (HSTs) are localized on conditionally dispensable chromosomes (CDCs), also called supernumerary chromosomes, where they are present in multiple copies (PubMed:10975654). The CDCs are not essential for saprophytic growth but controls host-selective pathogenicity (PubMed:10975654).</text>
</comment>
<comment type="similarity">
    <text evidence="8">Belongs to the enoyl-CoA hydratase/isomerase family.</text>
</comment>
<reference key="1">
    <citation type="journal article" date="2000" name="Mol. Plant Microbe Interact.">
        <title>Structural and functional complexity of the genomic region controlling AK-toxin biosynthesis and pathogenicity in the Japanese pear pathotype of Alternaria alternata.</title>
        <authorList>
            <person name="Tanaka A."/>
            <person name="Tsuge T."/>
        </authorList>
    </citation>
    <scope>NUCLEOTIDE SEQUENCE [GENOMIC DNA]</scope>
    <scope>FUNCTION</scope>
    <scope>PATHWAY</scope>
    <source>
        <strain>15A</strain>
    </source>
</reference>
<reference key="2">
    <citation type="journal article" date="1999" name="Mol. Plant Microbe Interact.">
        <title>Insertional mutagenesis and cloning of the genes required for biosynthesis of the host-specific AK-toxin in the Japanese pear pathotype of Alternaria alternata.</title>
        <authorList>
            <person name="Tanaka A."/>
            <person name="Shiotani H."/>
            <person name="Yamamoto M."/>
            <person name="Tsuge T."/>
        </authorList>
    </citation>
    <scope>FUNCTION</scope>
    <source>
        <strain>15A</strain>
    </source>
</reference>
<reference key="3">
    <citation type="journal article" date="2010" name="Eukaryot. Cell">
        <title>Contribution of peroxisomes to secondary metabolism and pathogenicity in the fungal plant pathogen Alternaria alternata.</title>
        <authorList>
            <person name="Imazaki A."/>
            <person name="Tanaka A."/>
            <person name="Harimoto Y."/>
            <person name="Yamamoto M."/>
            <person name="Akimitsu K."/>
            <person name="Park P."/>
            <person name="Tsuge T."/>
        </authorList>
    </citation>
    <scope>FUNCTION</scope>
</reference>
<reference key="4">
    <citation type="journal article" date="2013" name="FEMS Microbiol. Rev.">
        <title>Host-selective toxins produced by the plant pathogenic fungus Alternaria alternata.</title>
        <authorList>
            <person name="Tsuge T."/>
            <person name="Harimoto Y."/>
            <person name="Akimitsu K."/>
            <person name="Ohtani K."/>
            <person name="Kodama M."/>
            <person name="Akagi Y."/>
            <person name="Egusa M."/>
            <person name="Yamamoto M."/>
            <person name="Otani H."/>
        </authorList>
    </citation>
    <scope>REVIEW ON HOST-SELECTIVE TOXINS</scope>
</reference>
<reference key="5">
    <citation type="journal article" date="2014" name="New Phytol.">
        <title>Complex regulation of secondary metabolism controlling pathogenicity in the phytopathogenic fungus Alternaria alternata.</title>
        <authorList>
            <person name="Takaoka S."/>
            <person name="Kurata M."/>
            <person name="Harimoto Y."/>
            <person name="Hatta R."/>
            <person name="Yamamoto M."/>
            <person name="Akimitsu K."/>
            <person name="Tsuge T."/>
        </authorList>
    </citation>
    <scope>FUNCTION</scope>
    <source>
        <strain>15A</strain>
    </source>
</reference>
<proteinExistence type="inferred from homology"/>
<accession>Q9P4U7</accession>
<gene>
    <name evidence="6" type="primary">AKT3-2</name>
</gene>
<feature type="chain" id="PRO_0000444832" description="Enoyl-CoA hydratase AKT3-2">
    <location>
        <begin position="1"/>
        <end position="296"/>
    </location>
</feature>
<feature type="short sequence motif" description="Peroxisomal targeting signal type 1" evidence="1">
    <location>
        <begin position="294"/>
        <end position="296"/>
    </location>
</feature>
<organism>
    <name type="scientific">Alternaria alternata</name>
    <name type="common">Alternaria rot fungus</name>
    <name type="synonym">Torula alternata</name>
    <dbReference type="NCBI Taxonomy" id="5599"/>
    <lineage>
        <taxon>Eukaryota</taxon>
        <taxon>Fungi</taxon>
        <taxon>Dikarya</taxon>
        <taxon>Ascomycota</taxon>
        <taxon>Pezizomycotina</taxon>
        <taxon>Dothideomycetes</taxon>
        <taxon>Pleosporomycetidae</taxon>
        <taxon>Pleosporales</taxon>
        <taxon>Pleosporineae</taxon>
        <taxon>Pleosporaceae</taxon>
        <taxon>Alternaria</taxon>
        <taxon>Alternaria sect. Alternaria</taxon>
        <taxon>Alternaria alternata complex</taxon>
    </lineage>
</organism>
<dbReference type="EC" id="4.2.1.17" evidence="9"/>
<dbReference type="EMBL" id="AB035494">
    <property type="protein sequence ID" value="BAB07813.1"/>
    <property type="molecule type" value="Genomic_DNA"/>
</dbReference>
<dbReference type="SMR" id="Q9P4U7"/>
<dbReference type="VEuPathDB" id="FungiDB:CC77DRAFT_1025015"/>
<dbReference type="GO" id="GO:0005777">
    <property type="term" value="C:peroxisome"/>
    <property type="evidence" value="ECO:0007669"/>
    <property type="project" value="UniProtKB-SubCell"/>
</dbReference>
<dbReference type="GO" id="GO:0004300">
    <property type="term" value="F:enoyl-CoA hydratase activity"/>
    <property type="evidence" value="ECO:0007669"/>
    <property type="project" value="UniProtKB-EC"/>
</dbReference>
<dbReference type="CDD" id="cd06558">
    <property type="entry name" value="crotonase-like"/>
    <property type="match status" value="1"/>
</dbReference>
<dbReference type="Gene3D" id="3.90.226.10">
    <property type="entry name" value="2-enoyl-CoA Hydratase, Chain A, domain 1"/>
    <property type="match status" value="1"/>
</dbReference>
<dbReference type="InterPro" id="IPR029045">
    <property type="entry name" value="ClpP/crotonase-like_dom_sf"/>
</dbReference>
<dbReference type="InterPro" id="IPR051053">
    <property type="entry name" value="ECH/Chromodomain_protein"/>
</dbReference>
<dbReference type="InterPro" id="IPR001753">
    <property type="entry name" value="Enoyl-CoA_hydra/iso"/>
</dbReference>
<dbReference type="PANTHER" id="PTHR43684">
    <property type="match status" value="1"/>
</dbReference>
<dbReference type="PANTHER" id="PTHR43684:SF4">
    <property type="entry name" value="ENOYL-COA HYDRATASE_ISOMERASE FAMILY PROTEIN (AFU_ORTHOLOGUE AFUA_1G01890)"/>
    <property type="match status" value="1"/>
</dbReference>
<dbReference type="Pfam" id="PF00378">
    <property type="entry name" value="ECH_1"/>
    <property type="match status" value="1"/>
</dbReference>
<dbReference type="SUPFAM" id="SSF52096">
    <property type="entry name" value="ClpP/crotonase"/>
    <property type="match status" value="1"/>
</dbReference>
<evidence type="ECO:0000250" key="1">
    <source>
        <dbReference type="UniProtKB" id="Q9P4U9"/>
    </source>
</evidence>
<evidence type="ECO:0000269" key="2">
    <source>
    </source>
</evidence>
<evidence type="ECO:0000269" key="3">
    <source>
    </source>
</evidence>
<evidence type="ECO:0000269" key="4">
    <source>
    </source>
</evidence>
<evidence type="ECO:0000269" key="5">
    <source>
    </source>
</evidence>
<evidence type="ECO:0000303" key="6">
    <source>
    </source>
</evidence>
<evidence type="ECO:0000303" key="7">
    <source>
    </source>
</evidence>
<evidence type="ECO:0000305" key="8"/>
<evidence type="ECO:0000305" key="9">
    <source>
    </source>
</evidence>
<sequence length="296" mass="32114">MLNRFSYSSNAWHNLRVDGPDADGIAVIVLARSQSRNALTLPMLTDMIQLLSAMDADDSVKCIVFTGEGQFFCSGVDLTEGFGEIGKTRDTHRDAGGKLALAIHNCCKPTIAAINGTAVGVGITMTLPMSIRIAAKTAKISFPFVRREIVADAASSFYLPRLIGYGRALHLFTTGALYSAESGLLHGLFSETVNSASSTLPRALEVARDIAINTSQVGGCLTRDLIYRSSQSPEQAHLLESAILYTRYQSRDFKEGVKSFLEKRKPRFQDTMREQSGEGVLERGDCVVGLASKPKL</sequence>